<reference key="1">
    <citation type="journal article" date="2007" name="BMC Microbiol.">
        <title>Subtle genetic changes enhance virulence of methicillin resistant and sensitive Staphylococcus aureus.</title>
        <authorList>
            <person name="Highlander S.K."/>
            <person name="Hulten K.G."/>
            <person name="Qin X."/>
            <person name="Jiang H."/>
            <person name="Yerrapragada S."/>
            <person name="Mason E.O. Jr."/>
            <person name="Shang Y."/>
            <person name="Williams T.M."/>
            <person name="Fortunov R.M."/>
            <person name="Liu Y."/>
            <person name="Igboeli O."/>
            <person name="Petrosino J."/>
            <person name="Tirumalai M."/>
            <person name="Uzman A."/>
            <person name="Fox G.E."/>
            <person name="Cardenas A.M."/>
            <person name="Muzny D.M."/>
            <person name="Hemphill L."/>
            <person name="Ding Y."/>
            <person name="Dugan S."/>
            <person name="Blyth P.R."/>
            <person name="Buhay C.J."/>
            <person name="Dinh H.H."/>
            <person name="Hawes A.C."/>
            <person name="Holder M."/>
            <person name="Kovar C.L."/>
            <person name="Lee S.L."/>
            <person name="Liu W."/>
            <person name="Nazareth L.V."/>
            <person name="Wang Q."/>
            <person name="Zhou J."/>
            <person name="Kaplan S.L."/>
            <person name="Weinstock G.M."/>
        </authorList>
    </citation>
    <scope>NUCLEOTIDE SEQUENCE [LARGE SCALE GENOMIC DNA]</scope>
    <source>
        <strain>USA300 / TCH1516</strain>
    </source>
</reference>
<comment type="function">
    <text evidence="1">Catalyzes the reversible aldol cleavage of N-acetylneuraminic acid (sialic acid; Neu5Ac) to form pyruvate and N-acetylmannosamine (ManNAc) via a Schiff base intermediate.</text>
</comment>
<comment type="catalytic activity">
    <reaction evidence="1">
        <text>aceneuramate = aldehydo-N-acetyl-D-mannosamine + pyruvate</text>
        <dbReference type="Rhea" id="RHEA:23296"/>
        <dbReference type="ChEBI" id="CHEBI:15361"/>
        <dbReference type="ChEBI" id="CHEBI:17122"/>
        <dbReference type="ChEBI" id="CHEBI:173083"/>
        <dbReference type="EC" id="4.1.3.3"/>
    </reaction>
</comment>
<comment type="pathway">
    <text evidence="1">Amino-sugar metabolism; N-acetylneuraminate degradation; D-fructose 6-phosphate from N-acetylneuraminate: step 1/5.</text>
</comment>
<comment type="subunit">
    <text evidence="1">Homotetramer.</text>
</comment>
<comment type="subcellular location">
    <subcellularLocation>
        <location evidence="1">Cytoplasm</location>
    </subcellularLocation>
</comment>
<comment type="similarity">
    <text evidence="1">Belongs to the DapA family. NanA subfamily.</text>
</comment>
<gene>
    <name evidence="1" type="primary">nanA</name>
    <name type="ordered locus">USA300HOU_0335</name>
</gene>
<evidence type="ECO:0000255" key="1">
    <source>
        <dbReference type="HAMAP-Rule" id="MF_01237"/>
    </source>
</evidence>
<keyword id="KW-0119">Carbohydrate metabolism</keyword>
<keyword id="KW-0963">Cytoplasm</keyword>
<keyword id="KW-0456">Lyase</keyword>
<keyword id="KW-0704">Schiff base</keyword>
<dbReference type="EC" id="4.1.3.3" evidence="1"/>
<dbReference type="EMBL" id="CP000730">
    <property type="protein sequence ID" value="ABX28365.1"/>
    <property type="molecule type" value="Genomic_DNA"/>
</dbReference>
<dbReference type="RefSeq" id="WP_001030738.1">
    <property type="nucleotide sequence ID" value="NC_010079.1"/>
</dbReference>
<dbReference type="SMR" id="A8YZD9"/>
<dbReference type="KEGG" id="sax:USA300HOU_0335"/>
<dbReference type="HOGENOM" id="CLU_049343_5_1_9"/>
<dbReference type="UniPathway" id="UPA00629">
    <property type="reaction ID" value="UER00680"/>
</dbReference>
<dbReference type="GO" id="GO:0005829">
    <property type="term" value="C:cytosol"/>
    <property type="evidence" value="ECO:0007669"/>
    <property type="project" value="TreeGrafter"/>
</dbReference>
<dbReference type="GO" id="GO:0008747">
    <property type="term" value="F:N-acetylneuraminate lyase activity"/>
    <property type="evidence" value="ECO:0007669"/>
    <property type="project" value="UniProtKB-UniRule"/>
</dbReference>
<dbReference type="GO" id="GO:0005975">
    <property type="term" value="P:carbohydrate metabolic process"/>
    <property type="evidence" value="ECO:0007669"/>
    <property type="project" value="UniProtKB-UniRule"/>
</dbReference>
<dbReference type="GO" id="GO:0019262">
    <property type="term" value="P:N-acetylneuraminate catabolic process"/>
    <property type="evidence" value="ECO:0007669"/>
    <property type="project" value="UniProtKB-UniRule"/>
</dbReference>
<dbReference type="CDD" id="cd00954">
    <property type="entry name" value="NAL"/>
    <property type="match status" value="1"/>
</dbReference>
<dbReference type="FunFam" id="3.20.20.70:FF:000039">
    <property type="entry name" value="N-acetylneuraminate lyase"/>
    <property type="match status" value="1"/>
</dbReference>
<dbReference type="Gene3D" id="3.20.20.70">
    <property type="entry name" value="Aldolase class I"/>
    <property type="match status" value="1"/>
</dbReference>
<dbReference type="HAMAP" id="MF_01237">
    <property type="entry name" value="N_acetylneuram_lyase"/>
    <property type="match status" value="1"/>
</dbReference>
<dbReference type="InterPro" id="IPR013785">
    <property type="entry name" value="Aldolase_TIM"/>
</dbReference>
<dbReference type="InterPro" id="IPR002220">
    <property type="entry name" value="DapA-like"/>
</dbReference>
<dbReference type="InterPro" id="IPR005264">
    <property type="entry name" value="NanA"/>
</dbReference>
<dbReference type="InterPro" id="IPR020625">
    <property type="entry name" value="Schiff_base-form_aldolases_AS"/>
</dbReference>
<dbReference type="NCBIfam" id="NF003164">
    <property type="entry name" value="PRK04147.1"/>
    <property type="match status" value="1"/>
</dbReference>
<dbReference type="PANTHER" id="PTHR42849">
    <property type="entry name" value="N-ACETYLNEURAMINATE LYASE"/>
    <property type="match status" value="1"/>
</dbReference>
<dbReference type="PANTHER" id="PTHR42849:SF1">
    <property type="entry name" value="N-ACETYLNEURAMINATE LYASE"/>
    <property type="match status" value="1"/>
</dbReference>
<dbReference type="Pfam" id="PF00701">
    <property type="entry name" value="DHDPS"/>
    <property type="match status" value="1"/>
</dbReference>
<dbReference type="PIRSF" id="PIRSF001365">
    <property type="entry name" value="DHDPS"/>
    <property type="match status" value="1"/>
</dbReference>
<dbReference type="PRINTS" id="PR00146">
    <property type="entry name" value="DHPICSNTHASE"/>
</dbReference>
<dbReference type="SMART" id="SM01130">
    <property type="entry name" value="DHDPS"/>
    <property type="match status" value="1"/>
</dbReference>
<dbReference type="SUPFAM" id="SSF51569">
    <property type="entry name" value="Aldolase"/>
    <property type="match status" value="1"/>
</dbReference>
<dbReference type="PROSITE" id="PS00666">
    <property type="entry name" value="DHDPS_2"/>
    <property type="match status" value="1"/>
</dbReference>
<protein>
    <recommendedName>
        <fullName evidence="1">N-acetylneuraminate lyase</fullName>
        <shortName evidence="1">NAL</shortName>
        <shortName evidence="1">Neu5Ac lyase</shortName>
        <ecNumber evidence="1">4.1.3.3</ecNumber>
    </recommendedName>
    <alternativeName>
        <fullName evidence="1">N-acetylneuraminate pyruvate-lyase</fullName>
    </alternativeName>
    <alternativeName>
        <fullName evidence="1">N-acetylneuraminic acid aldolase</fullName>
    </alternativeName>
    <alternativeName>
        <fullName evidence="1">Sialate lyase</fullName>
    </alternativeName>
    <alternativeName>
        <fullName evidence="1">Sialic acid aldolase</fullName>
    </alternativeName>
    <alternativeName>
        <fullName evidence="1">Sialic acid lyase</fullName>
    </alternativeName>
</protein>
<feature type="chain" id="PRO_1000085742" description="N-acetylneuraminate lyase">
    <location>
        <begin position="1"/>
        <end position="293"/>
    </location>
</feature>
<feature type="active site" description="Proton donor" evidence="1">
    <location>
        <position position="137"/>
    </location>
</feature>
<feature type="active site" description="Schiff-base intermediate with substrate" evidence="1">
    <location>
        <position position="165"/>
    </location>
</feature>
<feature type="binding site" evidence="1">
    <location>
        <position position="48"/>
    </location>
    <ligand>
        <name>aceneuramate</name>
        <dbReference type="ChEBI" id="CHEBI:173083"/>
    </ligand>
</feature>
<feature type="binding site" evidence="1">
    <location>
        <position position="49"/>
    </location>
    <ligand>
        <name>aceneuramate</name>
        <dbReference type="ChEBI" id="CHEBI:173083"/>
    </ligand>
</feature>
<feature type="binding site" evidence="1">
    <location>
        <position position="167"/>
    </location>
    <ligand>
        <name>aceneuramate</name>
        <dbReference type="ChEBI" id="CHEBI:173083"/>
    </ligand>
</feature>
<feature type="binding site" evidence="1">
    <location>
        <position position="189"/>
    </location>
    <ligand>
        <name>aceneuramate</name>
        <dbReference type="ChEBI" id="CHEBI:173083"/>
    </ligand>
</feature>
<feature type="binding site" evidence="1">
    <location>
        <position position="191"/>
    </location>
    <ligand>
        <name>aceneuramate</name>
        <dbReference type="ChEBI" id="CHEBI:173083"/>
    </ligand>
</feature>
<feature type="binding site" evidence="1">
    <location>
        <position position="192"/>
    </location>
    <ligand>
        <name>aceneuramate</name>
        <dbReference type="ChEBI" id="CHEBI:173083"/>
    </ligand>
</feature>
<feature type="binding site" evidence="1">
    <location>
        <position position="208"/>
    </location>
    <ligand>
        <name>aceneuramate</name>
        <dbReference type="ChEBI" id="CHEBI:173083"/>
    </ligand>
</feature>
<sequence length="293" mass="33043">MNKDLKGLYAALLVPFDENGQVNEQGLKQIAQNAIETEELDGLYVNGSSGENFLLNTEQKKQVFKVAKEAVGDKVKLIAQVGSLDLNEAIELGKYATELGYDALSAVTPFYYPFTFEEIRDYYFDIIEATQNNMIIYAIPDLTGVNISIEQFSELFNHEKIVGVKYTAPNFFLLERIRKAFPDKLILSGFDEMLVQATISGVDGAIGSTYNVNGRRARKIFDLARQGQIQEAYQLQHDSNDIIETVLSMGIYPTLKEILRHRGIDAGLPKRPFKPFNEAHRQTLDQLIAKYDL</sequence>
<organism>
    <name type="scientific">Staphylococcus aureus (strain USA300 / TCH1516)</name>
    <dbReference type="NCBI Taxonomy" id="451516"/>
    <lineage>
        <taxon>Bacteria</taxon>
        <taxon>Bacillati</taxon>
        <taxon>Bacillota</taxon>
        <taxon>Bacilli</taxon>
        <taxon>Bacillales</taxon>
        <taxon>Staphylococcaceae</taxon>
        <taxon>Staphylococcus</taxon>
    </lineage>
</organism>
<accession>A8YZD9</accession>
<name>NANA_STAAT</name>
<proteinExistence type="inferred from homology"/>